<name>DAPH_BACC4</name>
<reference key="1">
    <citation type="submission" date="2008-10" db="EMBL/GenBank/DDBJ databases">
        <title>Genome sequence of Bacillus cereus B4264.</title>
        <authorList>
            <person name="Dodson R.J."/>
            <person name="Durkin A.S."/>
            <person name="Rosovitz M.J."/>
            <person name="Rasko D.A."/>
            <person name="Hoffmaster A."/>
            <person name="Ravel J."/>
            <person name="Sutton G."/>
        </authorList>
    </citation>
    <scope>NUCLEOTIDE SEQUENCE [LARGE SCALE GENOMIC DNA]</scope>
    <source>
        <strain>B4264</strain>
    </source>
</reference>
<organism>
    <name type="scientific">Bacillus cereus (strain B4264)</name>
    <dbReference type="NCBI Taxonomy" id="405532"/>
    <lineage>
        <taxon>Bacteria</taxon>
        <taxon>Bacillati</taxon>
        <taxon>Bacillota</taxon>
        <taxon>Bacilli</taxon>
        <taxon>Bacillales</taxon>
        <taxon>Bacillaceae</taxon>
        <taxon>Bacillus</taxon>
        <taxon>Bacillus cereus group</taxon>
    </lineage>
</organism>
<proteinExistence type="inferred from homology"/>
<gene>
    <name evidence="1" type="primary">dapH</name>
    <name type="ordered locus">BCB4264_A4084</name>
</gene>
<accession>B7H6W8</accession>
<comment type="function">
    <text evidence="1">Catalyzes the transfer of an acetyl group from acetyl-CoA to tetrahydrodipicolinate.</text>
</comment>
<comment type="catalytic activity">
    <reaction evidence="1">
        <text>(S)-2,3,4,5-tetrahydrodipicolinate + acetyl-CoA + H2O = L-2-acetamido-6-oxoheptanedioate + CoA</text>
        <dbReference type="Rhea" id="RHEA:13085"/>
        <dbReference type="ChEBI" id="CHEBI:15377"/>
        <dbReference type="ChEBI" id="CHEBI:16845"/>
        <dbReference type="ChEBI" id="CHEBI:57287"/>
        <dbReference type="ChEBI" id="CHEBI:57288"/>
        <dbReference type="ChEBI" id="CHEBI:58117"/>
        <dbReference type="EC" id="2.3.1.89"/>
    </reaction>
</comment>
<comment type="pathway">
    <text evidence="1">Amino-acid biosynthesis; L-lysine biosynthesis via DAP pathway; LL-2,6-diaminopimelate from (S)-tetrahydrodipicolinate (acetylase route): step 1/3.</text>
</comment>
<comment type="similarity">
    <text evidence="1">Belongs to the transferase hexapeptide repeat family. DapH subfamily.</text>
</comment>
<evidence type="ECO:0000255" key="1">
    <source>
        <dbReference type="HAMAP-Rule" id="MF_01691"/>
    </source>
</evidence>
<keyword id="KW-0012">Acyltransferase</keyword>
<keyword id="KW-0028">Amino-acid biosynthesis</keyword>
<keyword id="KW-0220">Diaminopimelate biosynthesis</keyword>
<keyword id="KW-0457">Lysine biosynthesis</keyword>
<keyword id="KW-0677">Repeat</keyword>
<keyword id="KW-0808">Transferase</keyword>
<dbReference type="EC" id="2.3.1.89" evidence="1"/>
<dbReference type="EMBL" id="CP001176">
    <property type="protein sequence ID" value="ACK64088.1"/>
    <property type="molecule type" value="Genomic_DNA"/>
</dbReference>
<dbReference type="SMR" id="B7H6W8"/>
<dbReference type="KEGG" id="bcb:BCB4264_A4084"/>
<dbReference type="HOGENOM" id="CLU_103751_0_0_9"/>
<dbReference type="UniPathway" id="UPA00034">
    <property type="reaction ID" value="UER00022"/>
</dbReference>
<dbReference type="Proteomes" id="UP000007096">
    <property type="component" value="Chromosome"/>
</dbReference>
<dbReference type="GO" id="GO:0047200">
    <property type="term" value="F:tetrahydrodipicolinate N-acetyltransferase activity"/>
    <property type="evidence" value="ECO:0007669"/>
    <property type="project" value="UniProtKB-EC"/>
</dbReference>
<dbReference type="GO" id="GO:0019877">
    <property type="term" value="P:diaminopimelate biosynthetic process"/>
    <property type="evidence" value="ECO:0007669"/>
    <property type="project" value="UniProtKB-UniRule"/>
</dbReference>
<dbReference type="GO" id="GO:0009089">
    <property type="term" value="P:lysine biosynthetic process via diaminopimelate"/>
    <property type="evidence" value="ECO:0007669"/>
    <property type="project" value="UniProtKB-UniRule"/>
</dbReference>
<dbReference type="CDD" id="cd03350">
    <property type="entry name" value="LbH_THP_succinylT"/>
    <property type="match status" value="1"/>
</dbReference>
<dbReference type="Gene3D" id="2.160.10.10">
    <property type="entry name" value="Hexapeptide repeat proteins"/>
    <property type="match status" value="1"/>
</dbReference>
<dbReference type="Gene3D" id="3.30.70.250">
    <property type="entry name" value="Malonyl-CoA ACP transacylase, ACP-binding"/>
    <property type="match status" value="1"/>
</dbReference>
<dbReference type="HAMAP" id="MF_01691">
    <property type="entry name" value="DapH"/>
    <property type="match status" value="1"/>
</dbReference>
<dbReference type="InterPro" id="IPR019873">
    <property type="entry name" value="DapH"/>
</dbReference>
<dbReference type="InterPro" id="IPR013710">
    <property type="entry name" value="DapH_N"/>
</dbReference>
<dbReference type="InterPro" id="IPR001451">
    <property type="entry name" value="Hexapep"/>
</dbReference>
<dbReference type="InterPro" id="IPR018357">
    <property type="entry name" value="Hexapep_transf_CS"/>
</dbReference>
<dbReference type="InterPro" id="IPR050179">
    <property type="entry name" value="Trans_hexapeptide_repeat"/>
</dbReference>
<dbReference type="InterPro" id="IPR011004">
    <property type="entry name" value="Trimer_LpxA-like_sf"/>
</dbReference>
<dbReference type="NCBIfam" id="TIGR03532">
    <property type="entry name" value="DapD_Ac"/>
    <property type="match status" value="1"/>
</dbReference>
<dbReference type="PANTHER" id="PTHR43300:SF10">
    <property type="entry name" value="2,3,4,5-TETRAHYDROPYRIDINE-2,6-DICARBOXYLATE N-ACETYLTRANSFERASE"/>
    <property type="match status" value="1"/>
</dbReference>
<dbReference type="PANTHER" id="PTHR43300">
    <property type="entry name" value="ACETYLTRANSFERASE"/>
    <property type="match status" value="1"/>
</dbReference>
<dbReference type="Pfam" id="PF08503">
    <property type="entry name" value="DapH_N"/>
    <property type="match status" value="1"/>
</dbReference>
<dbReference type="Pfam" id="PF00132">
    <property type="entry name" value="Hexapep"/>
    <property type="match status" value="1"/>
</dbReference>
<dbReference type="Pfam" id="PF14602">
    <property type="entry name" value="Hexapep_2"/>
    <property type="match status" value="1"/>
</dbReference>
<dbReference type="SUPFAM" id="SSF51161">
    <property type="entry name" value="Trimeric LpxA-like enzymes"/>
    <property type="match status" value="1"/>
</dbReference>
<dbReference type="PROSITE" id="PS00101">
    <property type="entry name" value="HEXAPEP_TRANSFERASES"/>
    <property type="match status" value="1"/>
</dbReference>
<sequence length="240" mass="25705">MKMMDANEIISFIQKSEKKTPVKVYIKGDLKEVTFPETVQAFVNKKSGVLFGEWSEIKTILDENNKHIVDYVVENDRRNSAIPMLDLKGIKARIEPGAIIRDHVEIGDNAVIMMNATINIGAVIGEGSMIDMNAVLGGRATVGKNCHVGAGAVLAGVIEPPSAKPVIVEDDVVIGANVVVLEGVTVGKGAVVAAGAVVTEDVPPYTVVAGTPARVIKEIDEKTKAKTEIKQELRQLNPEK</sequence>
<protein>
    <recommendedName>
        <fullName evidence="1">2,3,4,5-tetrahydropyridine-2,6-dicarboxylate N-acetyltransferase</fullName>
        <ecNumber evidence="1">2.3.1.89</ecNumber>
    </recommendedName>
    <alternativeName>
        <fullName evidence="1">Tetrahydrodipicolinate N-acetyltransferase</fullName>
        <shortName evidence="1">THP acetyltransferase</shortName>
        <shortName evidence="1">Tetrahydropicolinate acetylase</shortName>
    </alternativeName>
</protein>
<feature type="chain" id="PRO_0000376630" description="2,3,4,5-tetrahydropyridine-2,6-dicarboxylate N-acetyltransferase">
    <location>
        <begin position="1"/>
        <end position="240"/>
    </location>
</feature>